<organism>
    <name type="scientific">Escherichia coli (strain K12)</name>
    <dbReference type="NCBI Taxonomy" id="83333"/>
    <lineage>
        <taxon>Bacteria</taxon>
        <taxon>Pseudomonadati</taxon>
        <taxon>Pseudomonadota</taxon>
        <taxon>Gammaproteobacteria</taxon>
        <taxon>Enterobacterales</taxon>
        <taxon>Enterobacteriaceae</taxon>
        <taxon>Escherichia</taxon>
    </lineage>
</organism>
<feature type="signal peptide" evidence="1">
    <location>
        <begin position="1"/>
        <end position="21"/>
    </location>
</feature>
<feature type="chain" id="PRO_0000009254" description="Fimbrial subunit ElfA">
    <location>
        <begin position="22"/>
        <end position="179"/>
    </location>
</feature>
<reference key="1">
    <citation type="journal article" date="1996" name="DNA Res.">
        <title>A 718-kb DNA sequence of the Escherichia coli K-12 genome corresponding to the 12.7-28.0 min region on the linkage map.</title>
        <authorList>
            <person name="Oshima T."/>
            <person name="Aiba H."/>
            <person name="Baba T."/>
            <person name="Fujita K."/>
            <person name="Hayashi K."/>
            <person name="Honjo A."/>
            <person name="Ikemoto K."/>
            <person name="Inada T."/>
            <person name="Itoh T."/>
            <person name="Kajihara M."/>
            <person name="Kanai K."/>
            <person name="Kashimoto K."/>
            <person name="Kimura S."/>
            <person name="Kitagawa M."/>
            <person name="Makino K."/>
            <person name="Masuda S."/>
            <person name="Miki T."/>
            <person name="Mizobuchi K."/>
            <person name="Mori H."/>
            <person name="Motomura K."/>
            <person name="Nakamura Y."/>
            <person name="Nashimoto H."/>
            <person name="Nishio Y."/>
            <person name="Saito N."/>
            <person name="Sampei G."/>
            <person name="Seki Y."/>
            <person name="Tagami H."/>
            <person name="Takemoto K."/>
            <person name="Wada C."/>
            <person name="Yamamoto Y."/>
            <person name="Yano M."/>
            <person name="Horiuchi T."/>
        </authorList>
    </citation>
    <scope>NUCLEOTIDE SEQUENCE [LARGE SCALE GENOMIC DNA]</scope>
    <source>
        <strain>K12 / W3110 / ATCC 27325 / DSM 5911</strain>
    </source>
</reference>
<reference key="2">
    <citation type="journal article" date="1997" name="Science">
        <title>The complete genome sequence of Escherichia coli K-12.</title>
        <authorList>
            <person name="Blattner F.R."/>
            <person name="Plunkett G. III"/>
            <person name="Bloch C.A."/>
            <person name="Perna N.T."/>
            <person name="Burland V."/>
            <person name="Riley M."/>
            <person name="Collado-Vides J."/>
            <person name="Glasner J.D."/>
            <person name="Rode C.K."/>
            <person name="Mayhew G.F."/>
            <person name="Gregor J."/>
            <person name="Davis N.W."/>
            <person name="Kirkpatrick H.A."/>
            <person name="Goeden M.A."/>
            <person name="Rose D.J."/>
            <person name="Mau B."/>
            <person name="Shao Y."/>
        </authorList>
    </citation>
    <scope>NUCLEOTIDE SEQUENCE [LARGE SCALE GENOMIC DNA]</scope>
    <source>
        <strain>K12 / MG1655 / ATCC 47076</strain>
    </source>
</reference>
<reference key="3">
    <citation type="journal article" date="2006" name="Mol. Syst. Biol.">
        <title>Highly accurate genome sequences of Escherichia coli K-12 strains MG1655 and W3110.</title>
        <authorList>
            <person name="Hayashi K."/>
            <person name="Morooka N."/>
            <person name="Yamamoto Y."/>
            <person name="Fujita K."/>
            <person name="Isono K."/>
            <person name="Choi S."/>
            <person name="Ohtsubo E."/>
            <person name="Baba T."/>
            <person name="Wanner B.L."/>
            <person name="Mori H."/>
            <person name="Horiuchi T."/>
        </authorList>
    </citation>
    <scope>NUCLEOTIDE SEQUENCE [LARGE SCALE GENOMIC DNA]</scope>
    <source>
        <strain>K12 / W3110 / ATCC 27325 / DSM 5911</strain>
    </source>
</reference>
<reference key="4">
    <citation type="journal article" date="2010" name="Environ. Microbiol.">
        <title>Escherichia coli K-12 possesses multiple cryptic but functional chaperone-usher fimbriae with distinct surface specificities.</title>
        <authorList>
            <person name="Korea C.G."/>
            <person name="Badouraly R."/>
            <person name="Prevost M.C."/>
            <person name="Ghigo J.M."/>
            <person name="Beloin C."/>
        </authorList>
    </citation>
    <scope>FUNCTION AS A PILIN</scope>
    <scope>SUBCELLULAR LOCATION</scope>
    <scope>INDUCTION</scope>
    <source>
        <strain>K12 / MG1655 / ATCC 47076</strain>
    </source>
</reference>
<proteinExistence type="evidence at protein level"/>
<dbReference type="EMBL" id="U00096">
    <property type="protein sequence ID" value="AAC74024.2"/>
    <property type="molecule type" value="Genomic_DNA"/>
</dbReference>
<dbReference type="EMBL" id="AP009048">
    <property type="protein sequence ID" value="BAA35693.2"/>
    <property type="molecule type" value="Genomic_DNA"/>
</dbReference>
<dbReference type="PIR" id="A64834">
    <property type="entry name" value="A64834"/>
</dbReference>
<dbReference type="RefSeq" id="NP_415458.2">
    <property type="nucleotide sequence ID" value="NC_000913.3"/>
</dbReference>
<dbReference type="RefSeq" id="WP_000750293.1">
    <property type="nucleotide sequence ID" value="NZ_SSZK01000002.1"/>
</dbReference>
<dbReference type="SMR" id="P75855"/>
<dbReference type="BioGRID" id="4262988">
    <property type="interactions" value="188"/>
</dbReference>
<dbReference type="BioGRID" id="852604">
    <property type="interactions" value="1"/>
</dbReference>
<dbReference type="FunCoup" id="P75855">
    <property type="interactions" value="169"/>
</dbReference>
<dbReference type="IntAct" id="P75855">
    <property type="interactions" value="1"/>
</dbReference>
<dbReference type="STRING" id="511145.b0938"/>
<dbReference type="PaxDb" id="511145-b0938"/>
<dbReference type="EnsemblBacteria" id="AAC74024">
    <property type="protein sequence ID" value="AAC74024"/>
    <property type="gene ID" value="b0938"/>
</dbReference>
<dbReference type="GeneID" id="948306"/>
<dbReference type="KEGG" id="ecj:JW5122"/>
<dbReference type="KEGG" id="eco:b0938"/>
<dbReference type="KEGG" id="ecoc:C3026_05755"/>
<dbReference type="PATRIC" id="fig|1411691.4.peg.1336"/>
<dbReference type="EchoBASE" id="EB3473"/>
<dbReference type="eggNOG" id="COG3539">
    <property type="taxonomic scope" value="Bacteria"/>
</dbReference>
<dbReference type="HOGENOM" id="CLU_088965_0_0_6"/>
<dbReference type="InParanoid" id="P75855"/>
<dbReference type="OMA" id="FVATANF"/>
<dbReference type="OrthoDB" id="6463704at2"/>
<dbReference type="PhylomeDB" id="P75855"/>
<dbReference type="BioCyc" id="EcoCyc:G6480-MONOMER"/>
<dbReference type="PRO" id="PR:P75855"/>
<dbReference type="Proteomes" id="UP000000625">
    <property type="component" value="Chromosome"/>
</dbReference>
<dbReference type="GO" id="GO:0009289">
    <property type="term" value="C:pilus"/>
    <property type="evidence" value="ECO:0000314"/>
    <property type="project" value="EcoCyc"/>
</dbReference>
<dbReference type="GO" id="GO:0043709">
    <property type="term" value="P:cell adhesion involved in single-species biofilm formation"/>
    <property type="evidence" value="ECO:0000315"/>
    <property type="project" value="EcoCyc"/>
</dbReference>
<dbReference type="FunFam" id="2.60.40.1090:FF:000026">
    <property type="entry name" value="Fimbrial subunit ElfA"/>
    <property type="match status" value="1"/>
</dbReference>
<dbReference type="Gene3D" id="2.60.40.1090">
    <property type="entry name" value="Fimbrial-type adhesion domain"/>
    <property type="match status" value="1"/>
</dbReference>
<dbReference type="InterPro" id="IPR000259">
    <property type="entry name" value="Adhesion_dom_fimbrial"/>
</dbReference>
<dbReference type="InterPro" id="IPR036937">
    <property type="entry name" value="Adhesion_dom_fimbrial_sf"/>
</dbReference>
<dbReference type="InterPro" id="IPR008966">
    <property type="entry name" value="Adhesion_dom_sf"/>
</dbReference>
<dbReference type="InterPro" id="IPR050263">
    <property type="entry name" value="Bact_Fimbrial_Adh_Pro"/>
</dbReference>
<dbReference type="PANTHER" id="PTHR33420:SF3">
    <property type="entry name" value="FIMBRIAL SUBUNIT ELFA"/>
    <property type="match status" value="1"/>
</dbReference>
<dbReference type="PANTHER" id="PTHR33420">
    <property type="entry name" value="FIMBRIAL SUBUNIT ELFA-RELATED"/>
    <property type="match status" value="1"/>
</dbReference>
<dbReference type="Pfam" id="PF00419">
    <property type="entry name" value="Fimbrial"/>
    <property type="match status" value="1"/>
</dbReference>
<dbReference type="SUPFAM" id="SSF49401">
    <property type="entry name" value="Bacterial adhesins"/>
    <property type="match status" value="1"/>
</dbReference>
<keyword id="KW-0281">Fimbrium</keyword>
<keyword id="KW-1185">Reference proteome</keyword>
<keyword id="KW-0732">Signal</keyword>
<evidence type="ECO:0000255" key="1"/>
<evidence type="ECO:0000269" key="2">
    <source>
    </source>
</evidence>
<evidence type="ECO:0000305" key="3"/>
<evidence type="ECO:0000305" key="4">
    <source>
    </source>
</evidence>
<sequence length="179" mass="18680">MKKSVLTAFITVVCATSSVMAADDNAITDGSVTFNGKVIAPACTLVAATKDSVVTLPDVSATKLQTNGQVSGVQIDVPIELKDCDTTVTKNATFTFNGTADTTQITAFANQASSDAATNVALQMYMNDGTTAITPDTETGNILLQDGDQTLTFKVDYIATGKATSGNVNAVTNFHINYY</sequence>
<comment type="function">
    <text evidence="2">Part of the elfADCG-ycbUVF fimbrial operon, which promotes adhesion of bacteria to different abiotic surfaces. ElfA is the major fimbrial subunit produced by this operon.</text>
</comment>
<comment type="subcellular location">
    <subcellularLocation>
        <location evidence="2">Fimbrium</location>
    </subcellularLocation>
</comment>
<comment type="induction">
    <text evidence="2">Expression is negatively regulated by H-NS and subjected to cAMP receptor protein (CRP)-mediated catabolite repression.</text>
</comment>
<comment type="miscellaneous">
    <text evidence="4">The operon is cryptic under classical laboratory conditions, but is functional when constitutively expressed.</text>
</comment>
<comment type="similarity">
    <text evidence="3">Belongs to the fimbrial protein family.</text>
</comment>
<protein>
    <recommendedName>
        <fullName>Fimbrial subunit ElfA</fullName>
    </recommendedName>
</protein>
<gene>
    <name type="primary">elfA</name>
    <name type="synonym">ycbQ</name>
    <name type="ordered locus">b0938</name>
    <name type="ordered locus">JW5122</name>
</gene>
<name>ELFA_ECOLI</name>
<accession>P75855</accession>